<accession>P48517</accession>
<name>CYB_AKOAE</name>
<gene>
    <name type="primary">MT-CYB</name>
    <name type="synonym">COB</name>
    <name type="synonym">CYTB</name>
    <name type="synonym">MTCYB</name>
</gene>
<reference key="1">
    <citation type="submission" date="2003-12" db="EMBL/GenBank/DDBJ databases">
        <authorList>
            <person name="Smith M.F."/>
        </authorList>
    </citation>
    <scope>NUCLEOTIDE SEQUENCE [GENOMIC DNA]</scope>
    <source>
        <strain>Isolate MVZ 171679</strain>
        <strain>Isolate MVZ 171680</strain>
        <tissue>Liver</tissue>
    </source>
</reference>
<reference key="2">
    <citation type="journal article" date="1993" name="Biol. J. Linn. Soc. Lond.">
        <title>The diversification of South American murid rodents: evidence from mitochondrial DNA sequence data for the akodontine tribe.</title>
        <authorList>
            <person name="Smith M.F."/>
            <person name="Patton J.L."/>
        </authorList>
    </citation>
    <scope>NUCLEOTIDE SEQUENCE [GENOMIC DNA] OF 1-267</scope>
    <source>
        <strain>Isolate MVZ 171679</strain>
        <strain>Isolate MVZ 171680</strain>
        <tissue>Liver</tissue>
    </source>
</reference>
<reference key="3">
    <citation type="journal article" date="1991" name="Mol. Biol. Evol.">
        <title>Variation in mitochondrial cytochrome b sequence in natural populations of South American akodontine rodents (Muridae: Sigmodontinae).</title>
        <authorList>
            <person name="Smith M.F."/>
            <person name="Patton J.L."/>
        </authorList>
    </citation>
    <scope>NUCLEOTIDE SEQUENCE [GENOMIC DNA] OF 1-133</scope>
    <source>
        <strain>Isolate MVZ 171679</strain>
        <strain>Isolate MVZ 171680</strain>
        <tissue>Liver</tissue>
    </source>
</reference>
<proteinExistence type="inferred from homology"/>
<protein>
    <recommendedName>
        <fullName>Cytochrome b</fullName>
    </recommendedName>
    <alternativeName>
        <fullName>Complex III subunit 3</fullName>
    </alternativeName>
    <alternativeName>
        <fullName>Complex III subunit III</fullName>
    </alternativeName>
    <alternativeName>
        <fullName>Cytochrome b-c1 complex subunit 3</fullName>
    </alternativeName>
    <alternativeName>
        <fullName>Ubiquinol-cytochrome-c reductase complex cytochrome b subunit</fullName>
    </alternativeName>
</protein>
<geneLocation type="mitochondrion"/>
<organism>
    <name type="scientific">Akodon aerosus</name>
    <name type="common">Highland grass mouse</name>
    <dbReference type="NCBI Taxonomy" id="10070"/>
    <lineage>
        <taxon>Eukaryota</taxon>
        <taxon>Metazoa</taxon>
        <taxon>Chordata</taxon>
        <taxon>Craniata</taxon>
        <taxon>Vertebrata</taxon>
        <taxon>Euteleostomi</taxon>
        <taxon>Mammalia</taxon>
        <taxon>Eutheria</taxon>
        <taxon>Euarchontoglires</taxon>
        <taxon>Glires</taxon>
        <taxon>Rodentia</taxon>
        <taxon>Myomorpha</taxon>
        <taxon>Muroidea</taxon>
        <taxon>Cricetidae</taxon>
        <taxon>Sigmodontinae</taxon>
        <taxon>Akodon</taxon>
    </lineage>
</organism>
<evidence type="ECO:0000250" key="1"/>
<evidence type="ECO:0000250" key="2">
    <source>
        <dbReference type="UniProtKB" id="P00157"/>
    </source>
</evidence>
<evidence type="ECO:0000255" key="3">
    <source>
        <dbReference type="PROSITE-ProRule" id="PRU00967"/>
    </source>
</evidence>
<evidence type="ECO:0000255" key="4">
    <source>
        <dbReference type="PROSITE-ProRule" id="PRU00968"/>
    </source>
</evidence>
<sequence>MKILRKNHPLLKIVNHSFIDLPTPPNISSWWNFGSLLGVCLMIQILTGLFLAMHYTSDTTTAFSSVAHICRDVNYGWLIRYLHANGASMFFICLFIHVGRGIYYGSYVLSETWNIGIILFLTTMATAFVGYVLPWGQMSFWGATVITNLLSAIPYVGGTLVEWIWGGFSVDKATLTRFFAFHFILPFIITAFALVHLLFLHETGSNNPSGLNSDSDKIPFHPYYTIKDLLGILLLLLALMILALFFPDVLGDPDNFTPANPLNTPAHIKPEWYFLFAYTILRSIPNKLGGVLALILSILILAAFPLLNTSKQHGLIFRPITQTIYWTLIVNLLVLTWIGGQPVEYPFTTIGQIASITYFTTIIILMPVSNTIENNIIKL</sequence>
<feature type="chain" id="PRO_0000060539" description="Cytochrome b">
    <location>
        <begin position="1"/>
        <end position="379"/>
    </location>
</feature>
<feature type="transmembrane region" description="Helical" evidence="2">
    <location>
        <begin position="33"/>
        <end position="53"/>
    </location>
</feature>
<feature type="transmembrane region" description="Helical" evidence="2">
    <location>
        <begin position="77"/>
        <end position="98"/>
    </location>
</feature>
<feature type="transmembrane region" description="Helical" evidence="2">
    <location>
        <begin position="113"/>
        <end position="133"/>
    </location>
</feature>
<feature type="transmembrane region" description="Helical" evidence="2">
    <location>
        <begin position="178"/>
        <end position="198"/>
    </location>
</feature>
<feature type="transmembrane region" description="Helical" evidence="2">
    <location>
        <begin position="226"/>
        <end position="246"/>
    </location>
</feature>
<feature type="transmembrane region" description="Helical" evidence="2">
    <location>
        <begin position="288"/>
        <end position="308"/>
    </location>
</feature>
<feature type="transmembrane region" description="Helical" evidence="2">
    <location>
        <begin position="320"/>
        <end position="340"/>
    </location>
</feature>
<feature type="transmembrane region" description="Helical" evidence="2">
    <location>
        <begin position="347"/>
        <end position="367"/>
    </location>
</feature>
<feature type="binding site" description="axial binding residue" evidence="2">
    <location>
        <position position="83"/>
    </location>
    <ligand>
        <name>heme b</name>
        <dbReference type="ChEBI" id="CHEBI:60344"/>
        <label>b562</label>
    </ligand>
    <ligandPart>
        <name>Fe</name>
        <dbReference type="ChEBI" id="CHEBI:18248"/>
    </ligandPart>
</feature>
<feature type="binding site" description="axial binding residue" evidence="2">
    <location>
        <position position="97"/>
    </location>
    <ligand>
        <name>heme b</name>
        <dbReference type="ChEBI" id="CHEBI:60344"/>
        <label>b566</label>
    </ligand>
    <ligandPart>
        <name>Fe</name>
        <dbReference type="ChEBI" id="CHEBI:18248"/>
    </ligandPart>
</feature>
<feature type="binding site" description="axial binding residue" evidence="2">
    <location>
        <position position="182"/>
    </location>
    <ligand>
        <name>heme b</name>
        <dbReference type="ChEBI" id="CHEBI:60344"/>
        <label>b562</label>
    </ligand>
    <ligandPart>
        <name>Fe</name>
        <dbReference type="ChEBI" id="CHEBI:18248"/>
    </ligandPart>
</feature>
<feature type="binding site" description="axial binding residue" evidence="2">
    <location>
        <position position="196"/>
    </location>
    <ligand>
        <name>heme b</name>
        <dbReference type="ChEBI" id="CHEBI:60344"/>
        <label>b566</label>
    </ligand>
    <ligandPart>
        <name>Fe</name>
        <dbReference type="ChEBI" id="CHEBI:18248"/>
    </ligandPart>
</feature>
<feature type="binding site" evidence="2">
    <location>
        <position position="201"/>
    </location>
    <ligand>
        <name>a ubiquinone</name>
        <dbReference type="ChEBI" id="CHEBI:16389"/>
    </ligand>
</feature>
<comment type="function">
    <text evidence="2">Component of the ubiquinol-cytochrome c reductase complex (complex III or cytochrome b-c1 complex) that is part of the mitochondrial respiratory chain. The b-c1 complex mediates electron transfer from ubiquinol to cytochrome c. Contributes to the generation of a proton gradient across the mitochondrial membrane that is then used for ATP synthesis.</text>
</comment>
<comment type="cofactor">
    <cofactor evidence="2">
        <name>heme b</name>
        <dbReference type="ChEBI" id="CHEBI:60344"/>
    </cofactor>
    <text evidence="2">Binds 2 heme b groups non-covalently.</text>
</comment>
<comment type="subunit">
    <text evidence="2">The cytochrome bc1 complex contains 11 subunits: 3 respiratory subunits (MT-CYB, CYC1 and UQCRFS1), 2 core proteins (UQCRC1 and UQCRC2) and 6 low-molecular weight proteins (UQCRH/QCR6, UQCRB/QCR7, UQCRQ/QCR8, UQCR10/QCR9, UQCR11/QCR10 and a cleavage product of UQCRFS1). This cytochrome bc1 complex then forms a dimer.</text>
</comment>
<comment type="subcellular location">
    <subcellularLocation>
        <location evidence="2">Mitochondrion inner membrane</location>
        <topology evidence="2">Multi-pass membrane protein</topology>
    </subcellularLocation>
</comment>
<comment type="miscellaneous">
    <text evidence="1">Heme 1 (or BL or b562) is low-potential and absorbs at about 562 nm, and heme 2 (or BH or b566) is high-potential and absorbs at about 566 nm.</text>
</comment>
<comment type="similarity">
    <text evidence="3 4">Belongs to the cytochrome b family.</text>
</comment>
<comment type="caution">
    <text evidence="2">The full-length protein contains only eight transmembrane helices, not nine as predicted by bioinformatics tools.</text>
</comment>
<keyword id="KW-0249">Electron transport</keyword>
<keyword id="KW-0349">Heme</keyword>
<keyword id="KW-0408">Iron</keyword>
<keyword id="KW-0472">Membrane</keyword>
<keyword id="KW-0479">Metal-binding</keyword>
<keyword id="KW-0496">Mitochondrion</keyword>
<keyword id="KW-0999">Mitochondrion inner membrane</keyword>
<keyword id="KW-0679">Respiratory chain</keyword>
<keyword id="KW-0812">Transmembrane</keyword>
<keyword id="KW-1133">Transmembrane helix</keyword>
<keyword id="KW-0813">Transport</keyword>
<keyword id="KW-0830">Ubiquinone</keyword>
<dbReference type="EMBL" id="M35703">
    <property type="protein sequence ID" value="AAA16988.2"/>
    <property type="molecule type" value="Genomic_DNA"/>
</dbReference>
<dbReference type="PIR" id="H23725">
    <property type="entry name" value="H23725"/>
</dbReference>
<dbReference type="SMR" id="P48517"/>
<dbReference type="GO" id="GO:0005743">
    <property type="term" value="C:mitochondrial inner membrane"/>
    <property type="evidence" value="ECO:0007669"/>
    <property type="project" value="UniProtKB-SubCell"/>
</dbReference>
<dbReference type="GO" id="GO:0045275">
    <property type="term" value="C:respiratory chain complex III"/>
    <property type="evidence" value="ECO:0007669"/>
    <property type="project" value="InterPro"/>
</dbReference>
<dbReference type="GO" id="GO:0046872">
    <property type="term" value="F:metal ion binding"/>
    <property type="evidence" value="ECO:0007669"/>
    <property type="project" value="UniProtKB-KW"/>
</dbReference>
<dbReference type="GO" id="GO:0008121">
    <property type="term" value="F:ubiquinol-cytochrome-c reductase activity"/>
    <property type="evidence" value="ECO:0007669"/>
    <property type="project" value="InterPro"/>
</dbReference>
<dbReference type="GO" id="GO:0006122">
    <property type="term" value="P:mitochondrial electron transport, ubiquinol to cytochrome c"/>
    <property type="evidence" value="ECO:0007669"/>
    <property type="project" value="TreeGrafter"/>
</dbReference>
<dbReference type="CDD" id="cd00290">
    <property type="entry name" value="cytochrome_b_C"/>
    <property type="match status" value="1"/>
</dbReference>
<dbReference type="CDD" id="cd00284">
    <property type="entry name" value="Cytochrome_b_N"/>
    <property type="match status" value="1"/>
</dbReference>
<dbReference type="FunFam" id="1.20.810.10:FF:000002">
    <property type="entry name" value="Cytochrome b"/>
    <property type="match status" value="1"/>
</dbReference>
<dbReference type="Gene3D" id="1.20.810.10">
    <property type="entry name" value="Cytochrome Bc1 Complex, Chain C"/>
    <property type="match status" value="1"/>
</dbReference>
<dbReference type="InterPro" id="IPR005798">
    <property type="entry name" value="Cyt_b/b6_C"/>
</dbReference>
<dbReference type="InterPro" id="IPR036150">
    <property type="entry name" value="Cyt_b/b6_C_sf"/>
</dbReference>
<dbReference type="InterPro" id="IPR005797">
    <property type="entry name" value="Cyt_b/b6_N"/>
</dbReference>
<dbReference type="InterPro" id="IPR027387">
    <property type="entry name" value="Cytb/b6-like_sf"/>
</dbReference>
<dbReference type="InterPro" id="IPR030689">
    <property type="entry name" value="Cytochrome_b"/>
</dbReference>
<dbReference type="InterPro" id="IPR048260">
    <property type="entry name" value="Cytochrome_b_C_euk/bac"/>
</dbReference>
<dbReference type="InterPro" id="IPR048259">
    <property type="entry name" value="Cytochrome_b_N_euk/bac"/>
</dbReference>
<dbReference type="InterPro" id="IPR016174">
    <property type="entry name" value="Di-haem_cyt_TM"/>
</dbReference>
<dbReference type="PANTHER" id="PTHR19271">
    <property type="entry name" value="CYTOCHROME B"/>
    <property type="match status" value="1"/>
</dbReference>
<dbReference type="PANTHER" id="PTHR19271:SF16">
    <property type="entry name" value="CYTOCHROME B"/>
    <property type="match status" value="1"/>
</dbReference>
<dbReference type="Pfam" id="PF00032">
    <property type="entry name" value="Cytochrom_B_C"/>
    <property type="match status" value="1"/>
</dbReference>
<dbReference type="Pfam" id="PF00033">
    <property type="entry name" value="Cytochrome_B"/>
    <property type="match status" value="1"/>
</dbReference>
<dbReference type="PIRSF" id="PIRSF038885">
    <property type="entry name" value="COB"/>
    <property type="match status" value="1"/>
</dbReference>
<dbReference type="SUPFAM" id="SSF81648">
    <property type="entry name" value="a domain/subunit of cytochrome bc1 complex (Ubiquinol-cytochrome c reductase)"/>
    <property type="match status" value="1"/>
</dbReference>
<dbReference type="SUPFAM" id="SSF81342">
    <property type="entry name" value="Transmembrane di-heme cytochromes"/>
    <property type="match status" value="1"/>
</dbReference>
<dbReference type="PROSITE" id="PS51003">
    <property type="entry name" value="CYTB_CTER"/>
    <property type="match status" value="1"/>
</dbReference>
<dbReference type="PROSITE" id="PS51002">
    <property type="entry name" value="CYTB_NTER"/>
    <property type="match status" value="1"/>
</dbReference>